<organism>
    <name type="scientific">Nostoc sp. (strain PCC 7120 / SAG 25.82 / UTEX 2576)</name>
    <dbReference type="NCBI Taxonomy" id="103690"/>
    <lineage>
        <taxon>Bacteria</taxon>
        <taxon>Bacillati</taxon>
        <taxon>Cyanobacteriota</taxon>
        <taxon>Cyanophyceae</taxon>
        <taxon>Nostocales</taxon>
        <taxon>Nostocaceae</taxon>
        <taxon>Nostoc</taxon>
    </lineage>
</organism>
<name>LPXC_NOSS1</name>
<feature type="chain" id="PRO_0000191916" description="UDP-3-O-acyl-N-acetylglucosamine deacetylase">
    <location>
        <begin position="1"/>
        <end position="280"/>
    </location>
</feature>
<feature type="active site" description="Proton donor" evidence="1">
    <location>
        <position position="265"/>
    </location>
</feature>
<feature type="binding site" evidence="1">
    <location>
        <position position="77"/>
    </location>
    <ligand>
        <name>Zn(2+)</name>
        <dbReference type="ChEBI" id="CHEBI:29105"/>
    </ligand>
</feature>
<feature type="binding site" evidence="1">
    <location>
        <position position="238"/>
    </location>
    <ligand>
        <name>Zn(2+)</name>
        <dbReference type="ChEBI" id="CHEBI:29105"/>
    </ligand>
</feature>
<feature type="binding site" evidence="1">
    <location>
        <position position="242"/>
    </location>
    <ligand>
        <name>Zn(2+)</name>
        <dbReference type="ChEBI" id="CHEBI:29105"/>
    </ligand>
</feature>
<proteinExistence type="inferred from homology"/>
<sequence>MKQHTLAEAIAHTGVGLHSGVSTHVRILPADAGSGRYFVRVDLPDSPTIPAQVAVVSQTVLSTQLGGGETGVRTVEHLLAALAGMGVDNARIEIDGPEIPLLDGSAQEWVTSIAEVGLVAQAVTNNLASFDIQEPIWIHQDDAFVAAIPASETRFSYGIDFDLPAIGNQWYSWSLTTEPDTSFAQEIAPARTFGLLHQIEYLQKSGLIKGGSLDNALICGPDGWVNPPLRFANEPVRHKILDLVGDLSLLGYFPRAHFLAYKASHNLHIQLAQRILALSN</sequence>
<comment type="function">
    <text evidence="1">Catalyzes the hydrolysis of UDP-3-O-myristoyl-N-acetylglucosamine to form UDP-3-O-myristoylglucosamine and acetate, the committed step in lipid A biosynthesis.</text>
</comment>
<comment type="catalytic activity">
    <reaction evidence="1">
        <text>a UDP-3-O-[(3R)-3-hydroxyacyl]-N-acetyl-alpha-D-glucosamine + H2O = a UDP-3-O-[(3R)-3-hydroxyacyl]-alpha-D-glucosamine + acetate</text>
        <dbReference type="Rhea" id="RHEA:67816"/>
        <dbReference type="ChEBI" id="CHEBI:15377"/>
        <dbReference type="ChEBI" id="CHEBI:30089"/>
        <dbReference type="ChEBI" id="CHEBI:137740"/>
        <dbReference type="ChEBI" id="CHEBI:173225"/>
        <dbReference type="EC" id="3.5.1.108"/>
    </reaction>
</comment>
<comment type="cofactor">
    <cofactor evidence="1">
        <name>Zn(2+)</name>
        <dbReference type="ChEBI" id="CHEBI:29105"/>
    </cofactor>
</comment>
<comment type="pathway">
    <text evidence="1">Glycolipid biosynthesis; lipid IV(A) biosynthesis; lipid IV(A) from (3R)-3-hydroxytetradecanoyl-[acyl-carrier-protein] and UDP-N-acetyl-alpha-D-glucosamine: step 2/6.</text>
</comment>
<comment type="similarity">
    <text evidence="1">Belongs to the LpxC family.</text>
</comment>
<keyword id="KW-0378">Hydrolase</keyword>
<keyword id="KW-0441">Lipid A biosynthesis</keyword>
<keyword id="KW-0444">Lipid biosynthesis</keyword>
<keyword id="KW-0443">Lipid metabolism</keyword>
<keyword id="KW-0479">Metal-binding</keyword>
<keyword id="KW-1185">Reference proteome</keyword>
<keyword id="KW-0862">Zinc</keyword>
<accession>Q8YUR5</accession>
<reference key="1">
    <citation type="journal article" date="2001" name="DNA Res.">
        <title>Complete genomic sequence of the filamentous nitrogen-fixing cyanobacterium Anabaena sp. strain PCC 7120.</title>
        <authorList>
            <person name="Kaneko T."/>
            <person name="Nakamura Y."/>
            <person name="Wolk C.P."/>
            <person name="Kuritz T."/>
            <person name="Sasamoto S."/>
            <person name="Watanabe A."/>
            <person name="Iriguchi M."/>
            <person name="Ishikawa A."/>
            <person name="Kawashima K."/>
            <person name="Kimura T."/>
            <person name="Kishida Y."/>
            <person name="Kohara M."/>
            <person name="Matsumoto M."/>
            <person name="Matsuno A."/>
            <person name="Muraki A."/>
            <person name="Nakazaki N."/>
            <person name="Shimpo S."/>
            <person name="Sugimoto M."/>
            <person name="Takazawa M."/>
            <person name="Yamada M."/>
            <person name="Yasuda M."/>
            <person name="Tabata S."/>
        </authorList>
    </citation>
    <scope>NUCLEOTIDE SEQUENCE [LARGE SCALE GENOMIC DNA]</scope>
    <source>
        <strain>PCC 7120 / SAG 25.82 / UTEX 2576</strain>
    </source>
</reference>
<evidence type="ECO:0000255" key="1">
    <source>
        <dbReference type="HAMAP-Rule" id="MF_00388"/>
    </source>
</evidence>
<gene>
    <name evidence="1" type="primary">lpxC</name>
    <name type="ordered locus">alr2270</name>
</gene>
<dbReference type="EC" id="3.5.1.108" evidence="1"/>
<dbReference type="EMBL" id="BA000019">
    <property type="protein sequence ID" value="BAB73969.1"/>
    <property type="molecule type" value="Genomic_DNA"/>
</dbReference>
<dbReference type="PIR" id="AG2089">
    <property type="entry name" value="AG2089"/>
</dbReference>
<dbReference type="RefSeq" id="WP_010996427.1">
    <property type="nucleotide sequence ID" value="NZ_RSCN01000004.1"/>
</dbReference>
<dbReference type="SMR" id="Q8YUR5"/>
<dbReference type="STRING" id="103690.gene:10494299"/>
<dbReference type="KEGG" id="ana:alr2270"/>
<dbReference type="eggNOG" id="COG0774">
    <property type="taxonomic scope" value="Bacteria"/>
</dbReference>
<dbReference type="OrthoDB" id="9772788at2"/>
<dbReference type="UniPathway" id="UPA00359">
    <property type="reaction ID" value="UER00478"/>
</dbReference>
<dbReference type="Proteomes" id="UP000002483">
    <property type="component" value="Chromosome"/>
</dbReference>
<dbReference type="GO" id="GO:0016020">
    <property type="term" value="C:membrane"/>
    <property type="evidence" value="ECO:0007669"/>
    <property type="project" value="GOC"/>
</dbReference>
<dbReference type="GO" id="GO:0046872">
    <property type="term" value="F:metal ion binding"/>
    <property type="evidence" value="ECO:0007669"/>
    <property type="project" value="UniProtKB-KW"/>
</dbReference>
<dbReference type="GO" id="GO:0103117">
    <property type="term" value="F:UDP-3-O-acyl-N-acetylglucosamine deacetylase activity"/>
    <property type="evidence" value="ECO:0007669"/>
    <property type="project" value="UniProtKB-UniRule"/>
</dbReference>
<dbReference type="GO" id="GO:0009245">
    <property type="term" value="P:lipid A biosynthetic process"/>
    <property type="evidence" value="ECO:0007669"/>
    <property type="project" value="UniProtKB-UniRule"/>
</dbReference>
<dbReference type="Gene3D" id="3.30.230.20">
    <property type="entry name" value="lpxc deacetylase, domain 1"/>
    <property type="match status" value="1"/>
</dbReference>
<dbReference type="Gene3D" id="3.30.1700.10">
    <property type="entry name" value="lpxc deacetylase, domain 2"/>
    <property type="match status" value="1"/>
</dbReference>
<dbReference type="HAMAP" id="MF_00388">
    <property type="entry name" value="LpxC"/>
    <property type="match status" value="1"/>
</dbReference>
<dbReference type="InterPro" id="IPR020568">
    <property type="entry name" value="Ribosomal_Su5_D2-typ_SF"/>
</dbReference>
<dbReference type="InterPro" id="IPR004463">
    <property type="entry name" value="UDP-acyl_GlcNac_deAcase"/>
</dbReference>
<dbReference type="InterPro" id="IPR011334">
    <property type="entry name" value="UDP-acyl_GlcNac_deAcase_C"/>
</dbReference>
<dbReference type="InterPro" id="IPR015870">
    <property type="entry name" value="UDP-acyl_N-AcGlcN_deAcase_N"/>
</dbReference>
<dbReference type="NCBIfam" id="TIGR00325">
    <property type="entry name" value="lpxC"/>
    <property type="match status" value="1"/>
</dbReference>
<dbReference type="PANTHER" id="PTHR33694">
    <property type="entry name" value="UDP-3-O-ACYL-N-ACETYLGLUCOSAMINE DEACETYLASE 1, MITOCHONDRIAL-RELATED"/>
    <property type="match status" value="1"/>
</dbReference>
<dbReference type="PANTHER" id="PTHR33694:SF1">
    <property type="entry name" value="UDP-3-O-ACYL-N-ACETYLGLUCOSAMINE DEACETYLASE 1, MITOCHONDRIAL-RELATED"/>
    <property type="match status" value="1"/>
</dbReference>
<dbReference type="Pfam" id="PF03331">
    <property type="entry name" value="LpxC"/>
    <property type="match status" value="1"/>
</dbReference>
<dbReference type="SUPFAM" id="SSF54211">
    <property type="entry name" value="Ribosomal protein S5 domain 2-like"/>
    <property type="match status" value="2"/>
</dbReference>
<protein>
    <recommendedName>
        <fullName evidence="1">UDP-3-O-acyl-N-acetylglucosamine deacetylase</fullName>
        <shortName evidence="1">UDP-3-O-acyl-GlcNAc deacetylase</shortName>
        <ecNumber evidence="1">3.5.1.108</ecNumber>
    </recommendedName>
    <alternativeName>
        <fullName evidence="1">UDP-3-O-[R-3-hydroxymyristoyl]-N-acetylglucosamine deacetylase</fullName>
    </alternativeName>
</protein>